<proteinExistence type="inferred from homology"/>
<accession>A0L5Y4</accession>
<dbReference type="EMBL" id="CP000471">
    <property type="protein sequence ID" value="ABK43377.1"/>
    <property type="molecule type" value="Genomic_DNA"/>
</dbReference>
<dbReference type="RefSeq" id="WP_011712536.1">
    <property type="nucleotide sequence ID" value="NC_008576.1"/>
</dbReference>
<dbReference type="SMR" id="A0L5Y4"/>
<dbReference type="STRING" id="156889.Mmc1_0858"/>
<dbReference type="KEGG" id="mgm:Mmc1_0858"/>
<dbReference type="eggNOG" id="COG0198">
    <property type="taxonomic scope" value="Bacteria"/>
</dbReference>
<dbReference type="HOGENOM" id="CLU_093315_2_0_5"/>
<dbReference type="OrthoDB" id="9807419at2"/>
<dbReference type="Proteomes" id="UP000002586">
    <property type="component" value="Chromosome"/>
</dbReference>
<dbReference type="GO" id="GO:1990904">
    <property type="term" value="C:ribonucleoprotein complex"/>
    <property type="evidence" value="ECO:0007669"/>
    <property type="project" value="UniProtKB-KW"/>
</dbReference>
<dbReference type="GO" id="GO:0005840">
    <property type="term" value="C:ribosome"/>
    <property type="evidence" value="ECO:0007669"/>
    <property type="project" value="UniProtKB-KW"/>
</dbReference>
<dbReference type="GO" id="GO:0019843">
    <property type="term" value="F:rRNA binding"/>
    <property type="evidence" value="ECO:0007669"/>
    <property type="project" value="UniProtKB-UniRule"/>
</dbReference>
<dbReference type="GO" id="GO:0003735">
    <property type="term" value="F:structural constituent of ribosome"/>
    <property type="evidence" value="ECO:0007669"/>
    <property type="project" value="InterPro"/>
</dbReference>
<dbReference type="GO" id="GO:0006412">
    <property type="term" value="P:translation"/>
    <property type="evidence" value="ECO:0007669"/>
    <property type="project" value="UniProtKB-UniRule"/>
</dbReference>
<dbReference type="CDD" id="cd06089">
    <property type="entry name" value="KOW_RPL26"/>
    <property type="match status" value="1"/>
</dbReference>
<dbReference type="FunFam" id="2.30.30.30:FF:000004">
    <property type="entry name" value="50S ribosomal protein L24"/>
    <property type="match status" value="1"/>
</dbReference>
<dbReference type="Gene3D" id="2.30.30.30">
    <property type="match status" value="1"/>
</dbReference>
<dbReference type="HAMAP" id="MF_01326_B">
    <property type="entry name" value="Ribosomal_uL24_B"/>
    <property type="match status" value="1"/>
</dbReference>
<dbReference type="InterPro" id="IPR005824">
    <property type="entry name" value="KOW"/>
</dbReference>
<dbReference type="InterPro" id="IPR014722">
    <property type="entry name" value="Rib_uL2_dom2"/>
</dbReference>
<dbReference type="InterPro" id="IPR003256">
    <property type="entry name" value="Ribosomal_uL24"/>
</dbReference>
<dbReference type="InterPro" id="IPR005825">
    <property type="entry name" value="Ribosomal_uL24_CS"/>
</dbReference>
<dbReference type="InterPro" id="IPR041988">
    <property type="entry name" value="Ribosomal_uL24_KOW"/>
</dbReference>
<dbReference type="InterPro" id="IPR008991">
    <property type="entry name" value="Translation_prot_SH3-like_sf"/>
</dbReference>
<dbReference type="NCBIfam" id="TIGR01079">
    <property type="entry name" value="rplX_bact"/>
    <property type="match status" value="1"/>
</dbReference>
<dbReference type="PANTHER" id="PTHR12903">
    <property type="entry name" value="MITOCHONDRIAL RIBOSOMAL PROTEIN L24"/>
    <property type="match status" value="1"/>
</dbReference>
<dbReference type="Pfam" id="PF00467">
    <property type="entry name" value="KOW"/>
    <property type="match status" value="1"/>
</dbReference>
<dbReference type="Pfam" id="PF17136">
    <property type="entry name" value="ribosomal_L24"/>
    <property type="match status" value="1"/>
</dbReference>
<dbReference type="SMART" id="SM00739">
    <property type="entry name" value="KOW"/>
    <property type="match status" value="1"/>
</dbReference>
<dbReference type="SUPFAM" id="SSF50104">
    <property type="entry name" value="Translation proteins SH3-like domain"/>
    <property type="match status" value="1"/>
</dbReference>
<dbReference type="PROSITE" id="PS01108">
    <property type="entry name" value="RIBOSOMAL_L24"/>
    <property type="match status" value="1"/>
</dbReference>
<reference key="1">
    <citation type="journal article" date="2009" name="Appl. Environ. Microbiol.">
        <title>Complete genome sequence of the chemolithoautotrophic marine magnetotactic coccus strain MC-1.</title>
        <authorList>
            <person name="Schubbe S."/>
            <person name="Williams T.J."/>
            <person name="Xie G."/>
            <person name="Kiss H.E."/>
            <person name="Brettin T.S."/>
            <person name="Martinez D."/>
            <person name="Ross C.A."/>
            <person name="Schuler D."/>
            <person name="Cox B.L."/>
            <person name="Nealson K.H."/>
            <person name="Bazylinski D.A."/>
        </authorList>
    </citation>
    <scope>NUCLEOTIDE SEQUENCE [LARGE SCALE GENOMIC DNA]</scope>
    <source>
        <strain>ATCC BAA-1437 / JCM 17883 / MC-1</strain>
    </source>
</reference>
<evidence type="ECO:0000255" key="1">
    <source>
        <dbReference type="HAMAP-Rule" id="MF_01326"/>
    </source>
</evidence>
<evidence type="ECO:0000305" key="2"/>
<sequence>MAEHKSDFSTDLKKGDTVIVVAGKDKGKQGQILQVLGKKSSVLVEKVNMIKRHTKPAQNREGGIVEKEAPIHISNVMIVDPATGKATRIKKKNLEDGRKVRVAAGSGEVLDK</sequence>
<organism>
    <name type="scientific">Magnetococcus marinus (strain ATCC BAA-1437 / JCM 17883 / MC-1)</name>
    <dbReference type="NCBI Taxonomy" id="156889"/>
    <lineage>
        <taxon>Bacteria</taxon>
        <taxon>Pseudomonadati</taxon>
        <taxon>Pseudomonadota</taxon>
        <taxon>Alphaproteobacteria</taxon>
        <taxon>Magnetococcales</taxon>
        <taxon>Magnetococcaceae</taxon>
        <taxon>Magnetococcus</taxon>
    </lineage>
</organism>
<keyword id="KW-1185">Reference proteome</keyword>
<keyword id="KW-0687">Ribonucleoprotein</keyword>
<keyword id="KW-0689">Ribosomal protein</keyword>
<keyword id="KW-0694">RNA-binding</keyword>
<keyword id="KW-0699">rRNA-binding</keyword>
<comment type="function">
    <text evidence="1">One of two assembly initiator proteins, it binds directly to the 5'-end of the 23S rRNA, where it nucleates assembly of the 50S subunit.</text>
</comment>
<comment type="function">
    <text evidence="1">One of the proteins that surrounds the polypeptide exit tunnel on the outside of the subunit.</text>
</comment>
<comment type="subunit">
    <text evidence="1">Part of the 50S ribosomal subunit.</text>
</comment>
<comment type="similarity">
    <text evidence="1">Belongs to the universal ribosomal protein uL24 family.</text>
</comment>
<feature type="chain" id="PRO_0000355693" description="Large ribosomal subunit protein uL24">
    <location>
        <begin position="1"/>
        <end position="112"/>
    </location>
</feature>
<gene>
    <name evidence="1" type="primary">rplX</name>
    <name type="ordered locus">Mmc1_0858</name>
</gene>
<name>RL24_MAGMM</name>
<protein>
    <recommendedName>
        <fullName evidence="1">Large ribosomal subunit protein uL24</fullName>
    </recommendedName>
    <alternativeName>
        <fullName evidence="2">50S ribosomal protein L24</fullName>
    </alternativeName>
</protein>